<feature type="chain" id="PRO_0000268006" description="Ubiquitin carboxyl-terminal hydrolase 7">
    <location>
        <begin position="1"/>
        <end position="1103"/>
    </location>
</feature>
<feature type="domain" description="MATH" evidence="3">
    <location>
        <begin position="69"/>
        <end position="196"/>
    </location>
</feature>
<feature type="domain" description="USP">
    <location>
        <begin position="215"/>
        <end position="522"/>
    </location>
</feature>
<feature type="region of interest" description="Interaction with TSPYL5" evidence="2">
    <location>
        <begin position="1"/>
        <end position="209"/>
    </location>
</feature>
<feature type="region of interest" description="Disordered" evidence="6">
    <location>
        <begin position="1"/>
        <end position="41"/>
    </location>
</feature>
<feature type="region of interest" description="Disordered" evidence="6">
    <location>
        <begin position="46"/>
        <end position="65"/>
    </location>
</feature>
<feature type="region of interest" description="Interaction with p53/TP53 and MDM2" evidence="2">
    <location>
        <begin position="54"/>
        <end position="209"/>
    </location>
</feature>
<feature type="region of interest" description="Necessary for nuclear localization" evidence="2">
    <location>
        <begin position="71"/>
        <end position="206"/>
    </location>
</feature>
<feature type="compositionally biased region" description="Low complexity" evidence="6">
    <location>
        <begin position="1"/>
        <end position="11"/>
    </location>
</feature>
<feature type="compositionally biased region" description="Acidic residues" evidence="6">
    <location>
        <begin position="20"/>
        <end position="32"/>
    </location>
</feature>
<feature type="active site" description="Nucleophile" evidence="4 5 7 9">
    <location>
        <position position="224"/>
    </location>
</feature>
<feature type="active site" description="Proton acceptor" evidence="4 5">
    <location>
        <position position="465"/>
    </location>
</feature>
<feature type="modified residue" description="Phosphoserine" evidence="17 18">
    <location>
        <position position="19"/>
    </location>
</feature>
<feature type="modified residue" description="Phosphoserine" evidence="18">
    <location>
        <position position="50"/>
    </location>
</feature>
<feature type="modified residue" description="Phosphoserine" evidence="18">
    <location>
        <position position="54"/>
    </location>
</feature>
<feature type="modified residue" description="N6-acetyllysine; alternate" evidence="2">
    <location>
        <position position="870"/>
    </location>
</feature>
<feature type="modified residue" description="Phosphoserine" evidence="2">
    <location>
        <position position="964"/>
    </location>
</feature>
<feature type="modified residue" description="N6-acetyllysine" evidence="2">
    <location>
        <position position="1085"/>
    </location>
</feature>
<feature type="modified residue" description="N6-acetyllysine" evidence="2">
    <location>
        <position position="1097"/>
    </location>
</feature>
<feature type="cross-link" description="Glycyl lysine isopeptide (Lys-Gly) (interchain with G-Cter in SUMO2); alternate" evidence="2">
    <location>
        <position position="870"/>
    </location>
</feature>
<feature type="cross-link" description="Glycyl lysine isopeptide (Lys-Gly) (interchain with G-Cter in ubiquitin); alternate" evidence="2">
    <location>
        <position position="870"/>
    </location>
</feature>
<feature type="cross-link" description="Glycyl lysine isopeptide (Lys-Gly) (interchain with G-Cter in SUMO2)" evidence="2">
    <location>
        <position position="883"/>
    </location>
</feature>
<feature type="splice variant" id="VSP_021952" description="In isoform 2." evidence="15">
    <original>MNHQQQQQQQQKAGEQQLSEPEDMEME</original>
    <variation>MASSTSPPRSPSGGILTQDTIYFPQSNIISELLPWYLRYTPPEVPSTSVITKFILVNCPWNEGIEYQ</variation>
    <location>
        <begin position="1"/>
        <end position="27"/>
    </location>
</feature>
<feature type="splice variant" id="VSP_021953" description="In isoform 3." evidence="14">
    <original>E</original>
    <variation>ECLQ</variation>
    <location>
        <position position="974"/>
    </location>
</feature>
<feature type="splice variant" id="VSP_021954" description="In isoform 3." evidence="14">
    <original>YLEKAIKIHN</original>
    <variation>LGLC</variation>
    <location>
        <begin position="1094"/>
        <end position="1103"/>
    </location>
</feature>
<feature type="mutagenesis site" description="Loss of p53/TP53-deubiquitinating activity." evidence="7 9">
    <original>C</original>
    <variation>S</variation>
    <location>
        <position position="224"/>
    </location>
</feature>
<feature type="sequence conflict" description="In Ref. 2; BAE22671." evidence="16" ref="2">
    <original>E</original>
    <variation>K</variation>
    <location>
        <position position="162"/>
    </location>
</feature>
<sequence>MNHQQQQQQQQKAGEQQLSEPEDMEMEAGDTDDPPRITQNPVINGNVTLSDGHSNAEEDMEDDTSWRSEATFQFTVERFSRLSESVLSPPCFVRNLPWKIMVMPRFYPDRPHQKSVGFFLQCNAESDSTSWSCHAQAVLKIINYRDDDKSFSRRISHLFFHEENDWGFSNFMAWSEVTDPEKGFIDDDKVTFEVFVQADAPHGVAWDSKKHTGYVGLKNQGATCYMNSLLQTLFFTNQLRKAVYMMPTEGDDSSKSVPLALQRVFYELQHSDKPVGTKKLTKSFGWETLDSFMQHDVQELCRVLLDNVENKMKGTCVEGTIPKLFRGKMVSYIQCKDVDYRSDRREDYYDIQLSIKGKKNIFESFVDYVAVEQLDGDNKYDAGEHGLQEAEKGVKFLTLPPVLHLQLMRFMYDPQTDQNIKINDRFEFPEQLPLDEFLQKTDPKDPANYILHAVLVHSGDNHGGHYVVYLNPKGDGKWCKFDDDVVSRCTKEEAIEHNYGGHDDDLSVRHCTNAYMLVYIRESKLSEVLQAVTDHDIPQQLVERLQEEKRIEAQKRKERQEAHLYMQVQIVAEDQFCGHQGNDMYDEEKVRYTVFKVLKNSSLAEFVQSLSQTMGFPQDQIRLWPMQARSNGTKRPAMLDNEADGNKTMIELSDNENPWTIFLETVDPELAASGATLPKFDKDHDVMLFLKMYDPKTRSLNYCGHIYTPISCKIRDLLPVMCDRAGFIQDTSLILYEEVKPNLTERIQDYDVSLDKALDELMDGDIIVFQKDDPENDNSELPTAKEYFRDLYHRVDVIFCDKTIPNDPGFVVTLSNRMNYFQVAKTVAQRLNTDPMLLQFFKSQGYRDGPGNPLRHNYEGTLRDLLQFFKPRQPKKLYYQQLKMKITDFENRRSFKCIWLNSQFREEEITLYPDKHGCVRDLLEECKKAVELGDKASGRLRLLEIVSYKIIGVHQEDELLECLSPATSRTFRIEEIPLDQVDIDKENEMLITVAHFHKEVFGTFGIPFLLRIHQGEHFREVMKRIQSLLDIQEKEFEKFKFAIVMMGRHQYINEDEYEVNLKDFEPQPGNMSHPRPWLGLDHFNKAPKRSRYTYLEKAIKIHN</sequence>
<reference key="1">
    <citation type="journal article" date="2004" name="Int. J. Oncol.">
        <title>Identification and characterization of murine mHAUSP encoding a deubiquitinating enzyme that regulates the status of p53 ubiquitination.</title>
        <authorList>
            <person name="Lim S.-K."/>
            <person name="Shin J.-M."/>
            <person name="Kim Y.-S."/>
            <person name="Baek K.-H."/>
        </authorList>
    </citation>
    <scope>NUCLEOTIDE SEQUENCE [MRNA] (ISOFORM 1)</scope>
    <scope>FUNCTION</scope>
    <scope>CATALYTIC ACTIVITY</scope>
    <scope>TISSUE SPECIFICITY</scope>
    <scope>INTERACTION WITH TP53</scope>
    <scope>MUTAGENESIS OF CYS-224</scope>
</reference>
<reference key="2">
    <citation type="journal article" date="2005" name="Science">
        <title>The transcriptional landscape of the mammalian genome.</title>
        <authorList>
            <person name="Carninci P."/>
            <person name="Kasukawa T."/>
            <person name="Katayama S."/>
            <person name="Gough J."/>
            <person name="Frith M.C."/>
            <person name="Maeda N."/>
            <person name="Oyama R."/>
            <person name="Ravasi T."/>
            <person name="Lenhard B."/>
            <person name="Wells C."/>
            <person name="Kodzius R."/>
            <person name="Shimokawa K."/>
            <person name="Bajic V.B."/>
            <person name="Brenner S.E."/>
            <person name="Batalov S."/>
            <person name="Forrest A.R."/>
            <person name="Zavolan M."/>
            <person name="Davis M.J."/>
            <person name="Wilming L.G."/>
            <person name="Aidinis V."/>
            <person name="Allen J.E."/>
            <person name="Ambesi-Impiombato A."/>
            <person name="Apweiler R."/>
            <person name="Aturaliya R.N."/>
            <person name="Bailey T.L."/>
            <person name="Bansal M."/>
            <person name="Baxter L."/>
            <person name="Beisel K.W."/>
            <person name="Bersano T."/>
            <person name="Bono H."/>
            <person name="Chalk A.M."/>
            <person name="Chiu K.P."/>
            <person name="Choudhary V."/>
            <person name="Christoffels A."/>
            <person name="Clutterbuck D.R."/>
            <person name="Crowe M.L."/>
            <person name="Dalla E."/>
            <person name="Dalrymple B.P."/>
            <person name="de Bono B."/>
            <person name="Della Gatta G."/>
            <person name="di Bernardo D."/>
            <person name="Down T."/>
            <person name="Engstrom P."/>
            <person name="Fagiolini M."/>
            <person name="Faulkner G."/>
            <person name="Fletcher C.F."/>
            <person name="Fukushima T."/>
            <person name="Furuno M."/>
            <person name="Futaki S."/>
            <person name="Gariboldi M."/>
            <person name="Georgii-Hemming P."/>
            <person name="Gingeras T.R."/>
            <person name="Gojobori T."/>
            <person name="Green R.E."/>
            <person name="Gustincich S."/>
            <person name="Harbers M."/>
            <person name="Hayashi Y."/>
            <person name="Hensch T.K."/>
            <person name="Hirokawa N."/>
            <person name="Hill D."/>
            <person name="Huminiecki L."/>
            <person name="Iacono M."/>
            <person name="Ikeo K."/>
            <person name="Iwama A."/>
            <person name="Ishikawa T."/>
            <person name="Jakt M."/>
            <person name="Kanapin A."/>
            <person name="Katoh M."/>
            <person name="Kawasawa Y."/>
            <person name="Kelso J."/>
            <person name="Kitamura H."/>
            <person name="Kitano H."/>
            <person name="Kollias G."/>
            <person name="Krishnan S.P."/>
            <person name="Kruger A."/>
            <person name="Kummerfeld S.K."/>
            <person name="Kurochkin I.V."/>
            <person name="Lareau L.F."/>
            <person name="Lazarevic D."/>
            <person name="Lipovich L."/>
            <person name="Liu J."/>
            <person name="Liuni S."/>
            <person name="McWilliam S."/>
            <person name="Madan Babu M."/>
            <person name="Madera M."/>
            <person name="Marchionni L."/>
            <person name="Matsuda H."/>
            <person name="Matsuzawa S."/>
            <person name="Miki H."/>
            <person name="Mignone F."/>
            <person name="Miyake S."/>
            <person name="Morris K."/>
            <person name="Mottagui-Tabar S."/>
            <person name="Mulder N."/>
            <person name="Nakano N."/>
            <person name="Nakauchi H."/>
            <person name="Ng P."/>
            <person name="Nilsson R."/>
            <person name="Nishiguchi S."/>
            <person name="Nishikawa S."/>
            <person name="Nori F."/>
            <person name="Ohara O."/>
            <person name="Okazaki Y."/>
            <person name="Orlando V."/>
            <person name="Pang K.C."/>
            <person name="Pavan W.J."/>
            <person name="Pavesi G."/>
            <person name="Pesole G."/>
            <person name="Petrovsky N."/>
            <person name="Piazza S."/>
            <person name="Reed J."/>
            <person name="Reid J.F."/>
            <person name="Ring B.Z."/>
            <person name="Ringwald M."/>
            <person name="Rost B."/>
            <person name="Ruan Y."/>
            <person name="Salzberg S.L."/>
            <person name="Sandelin A."/>
            <person name="Schneider C."/>
            <person name="Schoenbach C."/>
            <person name="Sekiguchi K."/>
            <person name="Semple C.A."/>
            <person name="Seno S."/>
            <person name="Sessa L."/>
            <person name="Sheng Y."/>
            <person name="Shibata Y."/>
            <person name="Shimada H."/>
            <person name="Shimada K."/>
            <person name="Silva D."/>
            <person name="Sinclair B."/>
            <person name="Sperling S."/>
            <person name="Stupka E."/>
            <person name="Sugiura K."/>
            <person name="Sultana R."/>
            <person name="Takenaka Y."/>
            <person name="Taki K."/>
            <person name="Tammoja K."/>
            <person name="Tan S.L."/>
            <person name="Tang S."/>
            <person name="Taylor M.S."/>
            <person name="Tegner J."/>
            <person name="Teichmann S.A."/>
            <person name="Ueda H.R."/>
            <person name="van Nimwegen E."/>
            <person name="Verardo R."/>
            <person name="Wei C.L."/>
            <person name="Yagi K."/>
            <person name="Yamanishi H."/>
            <person name="Zabarovsky E."/>
            <person name="Zhu S."/>
            <person name="Zimmer A."/>
            <person name="Hide W."/>
            <person name="Bult C."/>
            <person name="Grimmond S.M."/>
            <person name="Teasdale R.D."/>
            <person name="Liu E.T."/>
            <person name="Brusic V."/>
            <person name="Quackenbush J."/>
            <person name="Wahlestedt C."/>
            <person name="Mattick J.S."/>
            <person name="Hume D.A."/>
            <person name="Kai C."/>
            <person name="Sasaki D."/>
            <person name="Tomaru Y."/>
            <person name="Fukuda S."/>
            <person name="Kanamori-Katayama M."/>
            <person name="Suzuki M."/>
            <person name="Aoki J."/>
            <person name="Arakawa T."/>
            <person name="Iida J."/>
            <person name="Imamura K."/>
            <person name="Itoh M."/>
            <person name="Kato T."/>
            <person name="Kawaji H."/>
            <person name="Kawagashira N."/>
            <person name="Kawashima T."/>
            <person name="Kojima M."/>
            <person name="Kondo S."/>
            <person name="Konno H."/>
            <person name="Nakano K."/>
            <person name="Ninomiya N."/>
            <person name="Nishio T."/>
            <person name="Okada M."/>
            <person name="Plessy C."/>
            <person name="Shibata K."/>
            <person name="Shiraki T."/>
            <person name="Suzuki S."/>
            <person name="Tagami M."/>
            <person name="Waki K."/>
            <person name="Watahiki A."/>
            <person name="Okamura-Oho Y."/>
            <person name="Suzuki H."/>
            <person name="Kawai J."/>
            <person name="Hayashizaki Y."/>
        </authorList>
    </citation>
    <scope>NUCLEOTIDE SEQUENCE [LARGE SCALE MRNA] OF 1-545 (ISOFORM 2)</scope>
    <scope>NUCLEOTIDE SEQUENCE [LARGE SCALE MRNA] OF 832-1103</scope>
    <source>
        <strain>C57BL/6J</strain>
        <tissue>Egg</tissue>
        <tissue>Stomach</tissue>
    </source>
</reference>
<reference key="3">
    <citation type="journal article" date="2004" name="Genome Res.">
        <title>The status, quality, and expansion of the NIH full-length cDNA project: the Mammalian Gene Collection (MGC).</title>
        <authorList>
            <consortium name="The MGC Project Team"/>
        </authorList>
    </citation>
    <scope>NUCLEOTIDE SEQUENCE [LARGE SCALE MRNA] OF 214-1103 (ISOFORM 3)</scope>
    <source>
        <strain>C57BL/6J</strain>
        <tissue>Brain</tissue>
    </source>
</reference>
<reference key="4">
    <citation type="journal article" date="2009" name="Immunity">
        <title>The phagosomal proteome in interferon-gamma-activated macrophages.</title>
        <authorList>
            <person name="Trost M."/>
            <person name="English L."/>
            <person name="Lemieux S."/>
            <person name="Courcelles M."/>
            <person name="Desjardins M."/>
            <person name="Thibault P."/>
        </authorList>
    </citation>
    <scope>PHOSPHORYLATION [LARGE SCALE ANALYSIS] AT SER-19</scope>
    <scope>IDENTIFICATION BY MASS SPECTROMETRY [LARGE SCALE ANALYSIS]</scope>
</reference>
<reference key="5">
    <citation type="journal article" date="2010" name="Cell">
        <title>A tissue-specific atlas of mouse protein phosphorylation and expression.</title>
        <authorList>
            <person name="Huttlin E.L."/>
            <person name="Jedrychowski M.P."/>
            <person name="Elias J.E."/>
            <person name="Goswami T."/>
            <person name="Rad R."/>
            <person name="Beausoleil S.A."/>
            <person name="Villen J."/>
            <person name="Haas W."/>
            <person name="Sowa M.E."/>
            <person name="Gygi S.P."/>
        </authorList>
    </citation>
    <scope>PHOSPHORYLATION [LARGE SCALE ANALYSIS] AT SER-19; SER-50 AND SER-54</scope>
    <scope>IDENTIFICATION BY MASS SPECTROMETRY [LARGE SCALE ANALYSIS]</scope>
    <source>
        <tissue>Brain</tissue>
        <tissue>Brown adipose tissue</tissue>
        <tissue>Heart</tissue>
        <tissue>Kidney</tissue>
        <tissue>Liver</tissue>
        <tissue>Lung</tissue>
        <tissue>Pancreas</tissue>
        <tissue>Spleen</tissue>
        <tissue>Testis</tissue>
    </source>
</reference>
<reference key="6">
    <citation type="journal article" date="2010" name="Oncogene">
        <title>Inactivation of HAUSP in vivo modulates p53 function.</title>
        <authorList>
            <person name="Kon N."/>
            <person name="Kobayashi Y."/>
            <person name="Li M."/>
            <person name="Brooks C.L."/>
            <person name="Ludwig T."/>
            <person name="Gu W."/>
        </authorList>
    </citation>
    <scope>FUNCTION</scope>
    <scope>SUBCELLULAR LOCATION</scope>
    <scope>DISRUPTION PHENOTYPE</scope>
</reference>
<reference key="7">
    <citation type="journal article" date="2011" name="J. Cell. Biochem.">
        <title>Usp7 and Uhrf1 control ubiquitination and stability of the maintenance DNA methyltransferase Dnmt1.</title>
        <authorList>
            <person name="Qin W."/>
            <person name="Leonhardt H."/>
            <person name="Spada F."/>
        </authorList>
    </citation>
    <scope>FUNCTION</scope>
    <scope>INTERACTION WITH DNMT1 AND UHRF1</scope>
    <scope>MUTAGENESIS OF CYS-224</scope>
</reference>
<reference key="8">
    <citation type="journal article" date="2013" name="Immunity">
        <title>Stabilization of the transcription factor Foxp3 by the deubiquitinase USP7 increases Treg-cell-suppressive capacity.</title>
        <authorList>
            <person name="van Loosdregt J."/>
            <person name="Fleskens V."/>
            <person name="Fu J."/>
            <person name="Brenkman A.B."/>
            <person name="Bekker C.P."/>
            <person name="Pals C.E."/>
            <person name="Meerding J."/>
            <person name="Berkers C.R."/>
            <person name="Barbi J."/>
            <person name="Grone A."/>
            <person name="Sijts A.J."/>
            <person name="Maurice M.M."/>
            <person name="Kalkhoven E."/>
            <person name="Prakken B.J."/>
            <person name="Ovaa H."/>
            <person name="Pan F."/>
            <person name="Zaiss D.M."/>
            <person name="Coffer P.J."/>
        </authorList>
    </citation>
    <scope>FUNCTION</scope>
</reference>
<reference key="9">
    <citation type="journal article" date="2015" name="Mol. Cell">
        <title>USP7 Acts as a Molecular Rheostat to Promote WASH-Dependent Endosomal Protein Recycling and Is Mutated in a Human Neurodevelopmental Disorder.</title>
        <authorList>
            <person name="Hao Y.H."/>
            <person name="Fountain M.D. Jr."/>
            <person name="Fon Tacer K."/>
            <person name="Xia F."/>
            <person name="Bi W."/>
            <person name="Kang S.H."/>
            <person name="Patel A."/>
            <person name="Rosenfeld J.A."/>
            <person name="Le Caignec C."/>
            <person name="Isidor B."/>
            <person name="Krantz I.D."/>
            <person name="Noon S.E."/>
            <person name="Pfotenhauer J.P."/>
            <person name="Morgan T.M."/>
            <person name="Moran R."/>
            <person name="Pedersen R.C."/>
            <person name="Saenz M.S."/>
            <person name="Schaaf C.P."/>
            <person name="Potts P.R."/>
        </authorList>
    </citation>
    <scope>TISSUE SPECIFICITY</scope>
</reference>
<reference key="10">
    <citation type="journal article" date="2016" name="Mol. Cell">
        <title>EPOP interacts with elongin BC and USP7 to modulate the chromatin landscape.</title>
        <authorList>
            <person name="Liefke R."/>
            <person name="Karwacki-Neisius V."/>
            <person name="Shi Y."/>
        </authorList>
    </citation>
    <scope>FUNCTION</scope>
    <scope>INTERACTION WITH EPOP</scope>
</reference>
<reference key="11">
    <citation type="journal article" date="2017" name="Mol. Cell">
        <authorList>
            <person name="Liefke R."/>
            <person name="Karwacki-Neisius V."/>
            <person name="Shi Y."/>
        </authorList>
    </citation>
    <scope>ERRATUM OF PUBMED:27863226</scope>
</reference>
<reference key="12">
    <citation type="journal article" date="2016" name="PLoS ONE">
        <title>USP7 and TDP-43: pleiotropic regulation of cryptochrome protein stability paces the oscillation of the mammalian circadian clock.</title>
        <authorList>
            <person name="Hirano A."/>
            <person name="Nakagawa T."/>
            <person name="Yoshitane H."/>
            <person name="Oyama M."/>
            <person name="Kozuka-Hata H."/>
            <person name="Lanjakornsiripan D."/>
            <person name="Fukada Y."/>
        </authorList>
    </citation>
    <scope>FUNCTION</scope>
</reference>
<comment type="function">
    <text evidence="2 10 12 13">Hydrolase that deubiquitinates target proteins such as ARMC5, FOXO4, DEPTOR, KAT5, p53/TP53, MDM2, ERCC6, DNMT1, UHRF1, PTEN, KMT2E/MLL5 and DAXX (PubMed:14719112, PubMed:19946331, PubMed:21268065). Together with DAXX, prevents MDM2 self-ubiquitination and enhances the E3 ligase activity of MDM2 towards p53/TP53, thereby promoting p53/TP53 ubiquitination and proteasomal degradation. Deubiquitinates p53/TP53, preventing degradation of p53/TP53, and enhances p53/TP53-dependent transcription regulation, cell growth repression and apoptosis. Deubiquitinates p53/TP53 and MDM2 and strongly stabilizes p53/TP53 even in the presence of excess MDM2, and also induces p53/TP53-dependent cell growth repression and apoptosis. Deubiquitination of FOXO4 in presence of hydrogen peroxide is not dependent on p53/TP53 and inhibits FOXO4-induced transcriptional activity. In association with DAXX, is involved in the deubiquitination and translocation of PTEN from the nucleus to the cytoplasm, both processes that are counteracted by PML. Deubiquitinates KMT2E preventing KMT2E proteasomal-mediated degradation (By similarity). Involved in cell proliferation during early embryonic development. Involved in transcription-coupled nucleotide excision repair (TC-NER) in response to UV damage: recruited to DNA damage sites following interaction with KIAA1530/UVSSA and promotes deubiquitination of ERCC6, preventing UV-induced degradation of ERCC6 (By similarity). Involved in maintenance of DNA methylation via its interaction with UHRF1 and DNMT1: acts by mediating deubiquitination of UHRF1 and DNMT1, preventing their degradation and promoting DNA methylation by DNMT1. Deubiquitinates alkylation repair enzyme ALKBH3. OTUD4 recruits USP7 and USP9X to stabilize ALKBH3, thereby promoting the repair of alkylated DNA lesions (By similarity). Acts as a chromatin regulator via its association with the Polycomb group (PcG) multiprotein PRC1-like complex; may act by deubiquitinating components of the PRC1-like complex (By similarity). Able to mediate deubiquitination of histone H2B; it is however unsure whether this activity takes place in vivo (PubMed:27863226). Exhibits a preference towards 'Lys-48'-linked ubiquitin chains. Increases regulatory T-cells (Treg) suppressive capacity by deubiquitinating and stabilizing the transcription factor FOXP3 which is crucial for Treg cell function (PubMed:23973222). Plays a role in the maintenance of the circadian clock periodicity via deubiquitination and stabilization of the CRY1 and CRY2 proteins (PubMed:27123980). Deubiquitinates REST, thereby stabilizing REST and promoting the maintenance of neural progenitor cells (By similarity). Deubiquitinates SIRT7, inhibiting SIRT7 histone deacetylase activity and regulating gluconeogenesis (By similarity). Involved in the regulation of WASH-dependent actin polymerization at the surface of endosomes and the regulation of endosomal protein recycling (By similarity). It maintains optimal WASH complex activity and precise F-actin levels via deubiquitination of TRIM27 and WASHC1 (By similarity). Mediates the deubiquitination of phosphorylated DEPTOR, promoting its stability and leading to decreased mTORC1 signaling (By similarity).</text>
</comment>
<comment type="catalytic activity">
    <reaction evidence="7 9">
        <text>Thiol-dependent hydrolysis of ester, thioester, amide, peptide and isopeptide bonds formed by the C-terminal Gly of ubiquitin (a 76-residue protein attached to proteins as an intracellular targeting signal).</text>
        <dbReference type="EC" id="3.4.19.12"/>
    </reaction>
</comment>
<comment type="subunit">
    <text evidence="2 7 9 13">Monomer. Homodimer. Part of a complex with DAXX, MDM2, RASSF1 and USP7. Part of a complex with DAXX, MDM2 and USP7. Interacts with MDM2; the interaction is independent of p53/TP53. Interacts with DAXX; the interaction is direct and independent of MDM2 and p53/TP53. Component of a complex composed of KMT2E, OGT and USP7; the complex stabilizes KMT2E, preventing KMT2E ubiquitination and proteasomal-mediated degradation (By similarity). Interacts (via MATH domain) with KMT2E (By similarity). Interacts with OGT (By similarity). Interacts with FOXO4; the interaction is enhanced in presence of hydrogen peroxide and occurs independently of p53/TP53. Interacts with p53/TP53; the interaction is enhanced in response to DNA damage; the interaction is impaired by TSPYL5. Interacts with PTEN; the interaction is direct. Interacts with ATXN1 and the strength of interaction is influenced by the length of the poly-Gln region in ATXN1. A weaker interaction seen with mutants having longer poly-Gln regions. Interacts with KIAA1530/UVSSA. Interacts with MEX3C and antagonizes its ability to degrade mRNA (By similarity). Interacts with DNMT1 and UHRF1 (PubMed:21268065). Interacts with FOXP3 (By similarity). Interacts (via MATH domain) with RNF220 (By similarity). Associated component of the Polycomb group (PcG) multiprotein PRC1-like complex (By similarity). Interacts with EPOP (PubMed:27863226). Interacts with OTUD4 and USP9X; the interaction is direct (By similarity). Interacts with CRY2 (By similarity). Interacts with REST (By similarity). Interacts with ERCC6 (By similarity). Part of a complex consisting of USP7, MAGEL2 and TRIM27; directly interacts with MAGEL2; directly interacts with TRIM27 (By similarity).</text>
</comment>
<comment type="interaction">
    <interactant intactId="EBI-1216254">
        <id>Q6A4J8</id>
    </interactant>
    <interactant intactId="EBI-1186266">
        <id>O08586</id>
        <label>Pten</label>
    </interactant>
    <organismsDiffer>false</organismsDiffer>
    <experiments>2</experiments>
</comment>
<comment type="subcellular location">
    <subcellularLocation>
        <location evidence="2">Nucleus</location>
    </subcellularLocation>
    <subcellularLocation>
        <location evidence="2">Cytoplasm</location>
    </subcellularLocation>
    <subcellularLocation>
        <location evidence="2">Nucleus</location>
        <location evidence="2">PML body</location>
    </subcellularLocation>
    <subcellularLocation>
        <location evidence="2">Chromosome</location>
    </subcellularLocation>
    <text evidence="2">Present in a minority of ND10 nuclear bodies. Association with ICP0/VMW110 at early times of infection leads to an increased proportion of USP7-containing ND10. Colocalizes with ATXN1 in the nucleus. Colocalized with DAXX in speckled structures. Colocalized with PML and PTEN in promyelocytic leukemia protein (PML) nuclear bodies.</text>
</comment>
<comment type="alternative products">
    <event type="alternative splicing"/>
    <isoform>
        <id>Q6A4J8-1</id>
        <name>1</name>
        <sequence type="displayed"/>
    </isoform>
    <isoform>
        <id>Q6A4J8-2</id>
        <name>2</name>
        <sequence type="described" ref="VSP_021952"/>
    </isoform>
    <isoform>
        <id>Q6A4J8-3</id>
        <name>3</name>
        <sequence type="described" ref="VSP_021953 VSP_021954"/>
    </isoform>
</comment>
<comment type="tissue specificity">
    <text evidence="7 11">Widely expressed. High expression is detected in brain, bone marrow, thymus and testis.</text>
</comment>
<comment type="developmental stage">
    <text>Expressed in embryo at 3.5 and from 7.5 to 10.5 dpc (at protein level).</text>
</comment>
<comment type="domain">
    <text evidence="1">The C-terminus plays a role in its oligomerization.</text>
</comment>
<comment type="PTM">
    <text evidence="1">Polyneddylated.</text>
</comment>
<comment type="PTM">
    <text evidence="1">Not sumoylated.</text>
</comment>
<comment type="PTM">
    <text evidence="1">Polyubiquitinated. Ubiquitinated at Lys-870 (By similarity).</text>
</comment>
<comment type="disruption phenotype">
    <text evidence="8">Led to early embryonic lethality. Show disorganized germinal layers without the formation of a proamniotic cavity. Many of the surviving cells were trophoblastic giant cells with large nuclei.</text>
</comment>
<comment type="similarity">
    <text evidence="16">Belongs to the peptidase C19 family.</text>
</comment>
<gene>
    <name type="primary">Usp7</name>
    <name type="synonym">Hausp</name>
</gene>
<accession>Q6A4J8</accession>
<accession>Q3UX92</accession>
<accession>Q496Y5</accession>
<accession>Q8BW01</accession>
<proteinExistence type="evidence at protein level"/>
<organism>
    <name type="scientific">Mus musculus</name>
    <name type="common">Mouse</name>
    <dbReference type="NCBI Taxonomy" id="10090"/>
    <lineage>
        <taxon>Eukaryota</taxon>
        <taxon>Metazoa</taxon>
        <taxon>Chordata</taxon>
        <taxon>Craniata</taxon>
        <taxon>Vertebrata</taxon>
        <taxon>Euteleostomi</taxon>
        <taxon>Mammalia</taxon>
        <taxon>Eutheria</taxon>
        <taxon>Euarchontoglires</taxon>
        <taxon>Glires</taxon>
        <taxon>Rodentia</taxon>
        <taxon>Myomorpha</taxon>
        <taxon>Muroidea</taxon>
        <taxon>Muridae</taxon>
        <taxon>Murinae</taxon>
        <taxon>Mus</taxon>
        <taxon>Mus</taxon>
    </lineage>
</organism>
<name>UBP7_MOUSE</name>
<protein>
    <recommendedName>
        <fullName>Ubiquitin carboxyl-terminal hydrolase 7</fullName>
        <ecNumber evidence="7 9">3.4.19.12</ecNumber>
    </recommendedName>
    <alternativeName>
        <fullName>Deubiquitinating enzyme 7</fullName>
    </alternativeName>
    <alternativeName>
        <fullName>Herpesvirus-associated ubiquitin-specific protease</fullName>
        <shortName>mHAUSP</shortName>
    </alternativeName>
    <alternativeName>
        <fullName>Ubiquitin thioesterase 7</fullName>
    </alternativeName>
    <alternativeName>
        <fullName>Ubiquitin-specific-processing protease 7</fullName>
    </alternativeName>
</protein>
<evidence type="ECO:0000250" key="1"/>
<evidence type="ECO:0000250" key="2">
    <source>
        <dbReference type="UniProtKB" id="Q93009"/>
    </source>
</evidence>
<evidence type="ECO:0000255" key="3">
    <source>
        <dbReference type="PROSITE-ProRule" id="PRU00129"/>
    </source>
</evidence>
<evidence type="ECO:0000255" key="4">
    <source>
        <dbReference type="PROSITE-ProRule" id="PRU10092"/>
    </source>
</evidence>
<evidence type="ECO:0000255" key="5">
    <source>
        <dbReference type="PROSITE-ProRule" id="PRU10093"/>
    </source>
</evidence>
<evidence type="ECO:0000256" key="6">
    <source>
        <dbReference type="SAM" id="MobiDB-lite"/>
    </source>
</evidence>
<evidence type="ECO:0000269" key="7">
    <source>
    </source>
</evidence>
<evidence type="ECO:0000269" key="8">
    <source>
    </source>
</evidence>
<evidence type="ECO:0000269" key="9">
    <source>
    </source>
</evidence>
<evidence type="ECO:0000269" key="10">
    <source>
    </source>
</evidence>
<evidence type="ECO:0000269" key="11">
    <source>
    </source>
</evidence>
<evidence type="ECO:0000269" key="12">
    <source>
    </source>
</evidence>
<evidence type="ECO:0000269" key="13">
    <source>
    </source>
</evidence>
<evidence type="ECO:0000303" key="14">
    <source>
    </source>
</evidence>
<evidence type="ECO:0000303" key="15">
    <source>
    </source>
</evidence>
<evidence type="ECO:0000305" key="16"/>
<evidence type="ECO:0007744" key="17">
    <source>
    </source>
</evidence>
<evidence type="ECO:0007744" key="18">
    <source>
    </source>
</evidence>
<dbReference type="EC" id="3.4.19.12" evidence="7 9"/>
<dbReference type="EMBL" id="AF548565">
    <property type="protein sequence ID" value="AAQ12339.1"/>
    <property type="molecule type" value="mRNA"/>
</dbReference>
<dbReference type="EMBL" id="AK075830">
    <property type="protein sequence ID" value="BAC35992.1"/>
    <property type="molecule type" value="mRNA"/>
</dbReference>
<dbReference type="EMBL" id="AK135814">
    <property type="protein sequence ID" value="BAE22671.1"/>
    <property type="molecule type" value="mRNA"/>
</dbReference>
<dbReference type="EMBL" id="BC100666">
    <property type="protein sequence ID" value="AAI00667.1"/>
    <property type="molecule type" value="mRNA"/>
</dbReference>
<dbReference type="CCDS" id="CCDS49755.1">
    <molecule id="Q6A4J8-1"/>
</dbReference>
<dbReference type="RefSeq" id="NP_001003918.2">
    <property type="nucleotide sequence ID" value="NM_001003918.2"/>
</dbReference>
<dbReference type="BMRB" id="Q6A4J8"/>
<dbReference type="SMR" id="Q6A4J8"/>
<dbReference type="BioGRID" id="232963">
    <property type="interactions" value="929"/>
</dbReference>
<dbReference type="DIP" id="DIP-38603N"/>
<dbReference type="FunCoup" id="Q6A4J8">
    <property type="interactions" value="4489"/>
</dbReference>
<dbReference type="IntAct" id="Q6A4J8">
    <property type="interactions" value="6"/>
</dbReference>
<dbReference type="MINT" id="Q6A4J8"/>
<dbReference type="STRING" id="10090.ENSMUSP00000124093"/>
<dbReference type="MEROPS" id="C19.016"/>
<dbReference type="GlyConnect" id="2806">
    <property type="glycosylation" value="2 N-Linked glycans (2 sites)"/>
</dbReference>
<dbReference type="GlyCosmos" id="Q6A4J8">
    <property type="glycosylation" value="2 sites, 2 glycans"/>
</dbReference>
<dbReference type="GlyGen" id="Q6A4J8">
    <property type="glycosylation" value="4 sites, 4 N-linked glycans (3 sites), 1 O-linked glycan (1 site)"/>
</dbReference>
<dbReference type="iPTMnet" id="Q6A4J8"/>
<dbReference type="PhosphoSitePlus" id="Q6A4J8"/>
<dbReference type="SwissPalm" id="Q6A4J8"/>
<dbReference type="jPOST" id="Q6A4J8"/>
<dbReference type="PaxDb" id="10090-ENSMUSP00000124093"/>
<dbReference type="PeptideAtlas" id="Q6A4J8"/>
<dbReference type="ProteomicsDB" id="297711">
    <molecule id="Q6A4J8-1"/>
</dbReference>
<dbReference type="ProteomicsDB" id="297712">
    <molecule id="Q6A4J8-2"/>
</dbReference>
<dbReference type="ProteomicsDB" id="297713">
    <molecule id="Q6A4J8-3"/>
</dbReference>
<dbReference type="Pumba" id="Q6A4J8"/>
<dbReference type="DNASU" id="252870"/>
<dbReference type="GeneID" id="252870"/>
<dbReference type="KEGG" id="mmu:252870"/>
<dbReference type="UCSC" id="uc007ycx.1">
    <molecule id="Q6A4J8-1"/>
    <property type="organism name" value="mouse"/>
</dbReference>
<dbReference type="AGR" id="MGI:2182061"/>
<dbReference type="CTD" id="7874"/>
<dbReference type="MGI" id="MGI:2182061">
    <property type="gene designation" value="Usp7"/>
</dbReference>
<dbReference type="eggNOG" id="KOG1863">
    <property type="taxonomic scope" value="Eukaryota"/>
</dbReference>
<dbReference type="InParanoid" id="Q6A4J8"/>
<dbReference type="OrthoDB" id="289038at2759"/>
<dbReference type="PhylomeDB" id="Q6A4J8"/>
<dbReference type="Reactome" id="R-MMU-5689880">
    <property type="pathway name" value="Ub-specific processing proteases"/>
</dbReference>
<dbReference type="Reactome" id="R-MMU-6781823">
    <property type="pathway name" value="Formation of TC-NER Pre-Incision Complex"/>
</dbReference>
<dbReference type="Reactome" id="R-MMU-6782135">
    <property type="pathway name" value="Dual incision in TC-NER"/>
</dbReference>
<dbReference type="Reactome" id="R-MMU-6782210">
    <property type="pathway name" value="Gap-filling DNA repair synthesis and ligation in TC-NER"/>
</dbReference>
<dbReference type="Reactome" id="R-MMU-6804757">
    <property type="pathway name" value="Regulation of TP53 Degradation"/>
</dbReference>
<dbReference type="Reactome" id="R-MMU-8866652">
    <property type="pathway name" value="Synthesis of active ubiquitin: roles of E1 and E2 enzymes"/>
</dbReference>
<dbReference type="Reactome" id="R-MMU-8948747">
    <property type="pathway name" value="Regulation of PTEN localization"/>
</dbReference>
<dbReference type="BioGRID-ORCS" id="252870">
    <property type="hits" value="25 hits in 120 CRISPR screens"/>
</dbReference>
<dbReference type="ChiTaRS" id="Usp7">
    <property type="organism name" value="mouse"/>
</dbReference>
<dbReference type="PRO" id="PR:Q6A4J8"/>
<dbReference type="Proteomes" id="UP000000589">
    <property type="component" value="Unplaced"/>
</dbReference>
<dbReference type="RNAct" id="Q6A4J8">
    <property type="molecule type" value="protein"/>
</dbReference>
<dbReference type="GO" id="GO:0005737">
    <property type="term" value="C:cytoplasm"/>
    <property type="evidence" value="ECO:0000314"/>
    <property type="project" value="MGI"/>
</dbReference>
<dbReference type="GO" id="GO:0005634">
    <property type="term" value="C:nucleus"/>
    <property type="evidence" value="ECO:0000314"/>
    <property type="project" value="MGI"/>
</dbReference>
<dbReference type="GO" id="GO:0016605">
    <property type="term" value="C:PML body"/>
    <property type="evidence" value="ECO:0007669"/>
    <property type="project" value="UniProtKB-SubCell"/>
</dbReference>
<dbReference type="GO" id="GO:0001741">
    <property type="term" value="C:XY body"/>
    <property type="evidence" value="ECO:0000314"/>
    <property type="project" value="MGI"/>
</dbReference>
<dbReference type="GO" id="GO:0004843">
    <property type="term" value="F:cysteine-type deubiquitinase activity"/>
    <property type="evidence" value="ECO:0000314"/>
    <property type="project" value="UniProtKB"/>
</dbReference>
<dbReference type="GO" id="GO:0004197">
    <property type="term" value="F:cysteine-type endopeptidase activity"/>
    <property type="evidence" value="ECO:0000315"/>
    <property type="project" value="UniProtKB"/>
</dbReference>
<dbReference type="GO" id="GO:0101005">
    <property type="term" value="F:deubiquitinase activity"/>
    <property type="evidence" value="ECO:0000250"/>
    <property type="project" value="UniProtKB"/>
</dbReference>
<dbReference type="GO" id="GO:1990380">
    <property type="term" value="F:K48-linked deubiquitinase activity"/>
    <property type="evidence" value="ECO:0000250"/>
    <property type="project" value="UniProtKB"/>
</dbReference>
<dbReference type="GO" id="GO:0006307">
    <property type="term" value="P:DNA alkylation repair"/>
    <property type="evidence" value="ECO:0000250"/>
    <property type="project" value="UniProtKB"/>
</dbReference>
<dbReference type="GO" id="GO:0035520">
    <property type="term" value="P:monoubiquitinated protein deubiquitination"/>
    <property type="evidence" value="ECO:0000266"/>
    <property type="project" value="MGI"/>
</dbReference>
<dbReference type="GO" id="GO:0045721">
    <property type="term" value="P:negative regulation of gluconeogenesis"/>
    <property type="evidence" value="ECO:0000250"/>
    <property type="project" value="UniProtKB"/>
</dbReference>
<dbReference type="GO" id="GO:0016579">
    <property type="term" value="P:protein deubiquitination"/>
    <property type="evidence" value="ECO:0000314"/>
    <property type="project" value="UniProtKB"/>
</dbReference>
<dbReference type="GO" id="GO:0050821">
    <property type="term" value="P:protein stabilization"/>
    <property type="evidence" value="ECO:0000250"/>
    <property type="project" value="UniProtKB"/>
</dbReference>
<dbReference type="GO" id="GO:0006508">
    <property type="term" value="P:proteolysis"/>
    <property type="evidence" value="ECO:0007669"/>
    <property type="project" value="UniProtKB-KW"/>
</dbReference>
<dbReference type="GO" id="GO:0042752">
    <property type="term" value="P:regulation of circadian rhythm"/>
    <property type="evidence" value="ECO:0000315"/>
    <property type="project" value="UniProtKB"/>
</dbReference>
<dbReference type="GO" id="GO:0051090">
    <property type="term" value="P:regulation of DNA-binding transcription factor activity"/>
    <property type="evidence" value="ECO:0000250"/>
    <property type="project" value="UniProtKB"/>
</dbReference>
<dbReference type="GO" id="GO:0031647">
    <property type="term" value="P:regulation of protein stability"/>
    <property type="evidence" value="ECO:0000315"/>
    <property type="project" value="UniProtKB"/>
</dbReference>
<dbReference type="GO" id="GO:0048511">
    <property type="term" value="P:rhythmic process"/>
    <property type="evidence" value="ECO:0007669"/>
    <property type="project" value="UniProtKB-KW"/>
</dbReference>
<dbReference type="GO" id="GO:0140673">
    <property type="term" value="P:transcription elongation-coupled chromatin remodeling"/>
    <property type="evidence" value="ECO:0000315"/>
    <property type="project" value="UniProtKB"/>
</dbReference>
<dbReference type="GO" id="GO:0006283">
    <property type="term" value="P:transcription-coupled nucleotide-excision repair"/>
    <property type="evidence" value="ECO:0000250"/>
    <property type="project" value="UniProtKB"/>
</dbReference>
<dbReference type="CDD" id="cd03772">
    <property type="entry name" value="MATH_HAUSP"/>
    <property type="match status" value="1"/>
</dbReference>
<dbReference type="CDD" id="cd02659">
    <property type="entry name" value="peptidase_C19C"/>
    <property type="match status" value="1"/>
</dbReference>
<dbReference type="FunFam" id="3.10.20.90:FF:000057">
    <property type="entry name" value="Putative ubiquitin carboxyl-terminal hydrolase 7"/>
    <property type="match status" value="1"/>
</dbReference>
<dbReference type="FunFam" id="3.10.20.90:FF:000064">
    <property type="entry name" value="Putative ubiquitin carboxyl-terminal hydrolase 7"/>
    <property type="match status" value="1"/>
</dbReference>
<dbReference type="FunFam" id="2.60.210.10:FF:000006">
    <property type="entry name" value="Ubiquitin carboxyl-terminal hydrolase 7"/>
    <property type="match status" value="1"/>
</dbReference>
<dbReference type="FunFam" id="3.90.70.10:FF:000005">
    <property type="entry name" value="Ubiquitin carboxyl-terminal hydrolase 7"/>
    <property type="match status" value="1"/>
</dbReference>
<dbReference type="Gene3D" id="2.60.210.10">
    <property type="entry name" value="Apoptosis, Tumor Necrosis Factor Receptor Associated Protein 2, Chain A"/>
    <property type="match status" value="1"/>
</dbReference>
<dbReference type="Gene3D" id="3.90.70.10">
    <property type="entry name" value="Cysteine proteinases"/>
    <property type="match status" value="1"/>
</dbReference>
<dbReference type="Gene3D" id="3.10.20.90">
    <property type="entry name" value="Phosphatidylinositol 3-kinase Catalytic Subunit, Chain A, domain 1"/>
    <property type="match status" value="2"/>
</dbReference>
<dbReference type="InterPro" id="IPR002083">
    <property type="entry name" value="MATH/TRAF_dom"/>
</dbReference>
<dbReference type="InterPro" id="IPR038765">
    <property type="entry name" value="Papain-like_cys_pep_sf"/>
</dbReference>
<dbReference type="InterPro" id="IPR050164">
    <property type="entry name" value="Peptidase_C19"/>
</dbReference>
<dbReference type="InterPro" id="IPR001394">
    <property type="entry name" value="Peptidase_C19_UCH"/>
</dbReference>
<dbReference type="InterPro" id="IPR008974">
    <property type="entry name" value="TRAF-like"/>
</dbReference>
<dbReference type="InterPro" id="IPR024729">
    <property type="entry name" value="USP7_ICP0-binding_dom"/>
</dbReference>
<dbReference type="InterPro" id="IPR029346">
    <property type="entry name" value="USP_C"/>
</dbReference>
<dbReference type="InterPro" id="IPR018200">
    <property type="entry name" value="USP_CS"/>
</dbReference>
<dbReference type="InterPro" id="IPR028889">
    <property type="entry name" value="USP_dom"/>
</dbReference>
<dbReference type="PANTHER" id="PTHR24006">
    <property type="entry name" value="UBIQUITIN CARBOXYL-TERMINAL HYDROLASE"/>
    <property type="match status" value="1"/>
</dbReference>
<dbReference type="PANTHER" id="PTHR24006:SF644">
    <property type="entry name" value="UBIQUITIN CARBOXYL-TERMINAL HYDROLASE 7"/>
    <property type="match status" value="1"/>
</dbReference>
<dbReference type="Pfam" id="PF22486">
    <property type="entry name" value="MATH_2"/>
    <property type="match status" value="1"/>
</dbReference>
<dbReference type="Pfam" id="PF00443">
    <property type="entry name" value="UCH"/>
    <property type="match status" value="1"/>
</dbReference>
<dbReference type="Pfam" id="PF14533">
    <property type="entry name" value="USP7_C2"/>
    <property type="match status" value="1"/>
</dbReference>
<dbReference type="Pfam" id="PF12436">
    <property type="entry name" value="USP7_ICP0_bdg"/>
    <property type="match status" value="1"/>
</dbReference>
<dbReference type="SMART" id="SM00061">
    <property type="entry name" value="MATH"/>
    <property type="match status" value="1"/>
</dbReference>
<dbReference type="SUPFAM" id="SSF54001">
    <property type="entry name" value="Cysteine proteinases"/>
    <property type="match status" value="1"/>
</dbReference>
<dbReference type="SUPFAM" id="SSF49599">
    <property type="entry name" value="TRAF domain-like"/>
    <property type="match status" value="1"/>
</dbReference>
<dbReference type="PROSITE" id="PS50144">
    <property type="entry name" value="MATH"/>
    <property type="match status" value="1"/>
</dbReference>
<dbReference type="PROSITE" id="PS00972">
    <property type="entry name" value="USP_1"/>
    <property type="match status" value="1"/>
</dbReference>
<dbReference type="PROSITE" id="PS00973">
    <property type="entry name" value="USP_2"/>
    <property type="match status" value="1"/>
</dbReference>
<dbReference type="PROSITE" id="PS50235">
    <property type="entry name" value="USP_3"/>
    <property type="match status" value="1"/>
</dbReference>
<keyword id="KW-0007">Acetylation</keyword>
<keyword id="KW-0025">Alternative splicing</keyword>
<keyword id="KW-0090">Biological rhythms</keyword>
<keyword id="KW-0158">Chromosome</keyword>
<keyword id="KW-0963">Cytoplasm</keyword>
<keyword id="KW-0217">Developmental protein</keyword>
<keyword id="KW-0227">DNA damage</keyword>
<keyword id="KW-0234">DNA repair</keyword>
<keyword id="KW-0378">Hydrolase</keyword>
<keyword id="KW-1017">Isopeptide bond</keyword>
<keyword id="KW-0539">Nucleus</keyword>
<keyword id="KW-0597">Phosphoprotein</keyword>
<keyword id="KW-0645">Protease</keyword>
<keyword id="KW-1185">Reference proteome</keyword>
<keyword id="KW-0788">Thiol protease</keyword>
<keyword id="KW-0832">Ubl conjugation</keyword>
<keyword id="KW-0833">Ubl conjugation pathway</keyword>